<accession>Q6MDG9</accession>
<name>TRMD_PARUW</name>
<protein>
    <recommendedName>
        <fullName evidence="1">tRNA (guanine-N(1)-)-methyltransferase</fullName>
        <ecNumber evidence="1">2.1.1.228</ecNumber>
    </recommendedName>
    <alternativeName>
        <fullName evidence="1">M1G-methyltransferase</fullName>
    </alternativeName>
    <alternativeName>
        <fullName evidence="1">tRNA [GM37] methyltransferase</fullName>
    </alternativeName>
</protein>
<proteinExistence type="inferred from homology"/>
<feature type="chain" id="PRO_0000060426" description="tRNA (guanine-N(1)-)-methyltransferase">
    <location>
        <begin position="1"/>
        <end position="222"/>
    </location>
</feature>
<feature type="binding site" evidence="1">
    <location>
        <position position="110"/>
    </location>
    <ligand>
        <name>S-adenosyl-L-methionine</name>
        <dbReference type="ChEBI" id="CHEBI:59789"/>
    </ligand>
</feature>
<feature type="binding site" evidence="1">
    <location>
        <begin position="130"/>
        <end position="135"/>
    </location>
    <ligand>
        <name>S-adenosyl-L-methionine</name>
        <dbReference type="ChEBI" id="CHEBI:59789"/>
    </ligand>
</feature>
<evidence type="ECO:0000255" key="1">
    <source>
        <dbReference type="HAMAP-Rule" id="MF_00605"/>
    </source>
</evidence>
<organism>
    <name type="scientific">Protochlamydia amoebophila (strain UWE25)</name>
    <dbReference type="NCBI Taxonomy" id="264201"/>
    <lineage>
        <taxon>Bacteria</taxon>
        <taxon>Pseudomonadati</taxon>
        <taxon>Chlamydiota</taxon>
        <taxon>Chlamydiia</taxon>
        <taxon>Parachlamydiales</taxon>
        <taxon>Parachlamydiaceae</taxon>
        <taxon>Candidatus Protochlamydia</taxon>
    </lineage>
</organism>
<dbReference type="EC" id="2.1.1.228" evidence="1"/>
<dbReference type="EMBL" id="BX908798">
    <property type="protein sequence ID" value="CAF23380.1"/>
    <property type="molecule type" value="Genomic_DNA"/>
</dbReference>
<dbReference type="RefSeq" id="WP_011175206.1">
    <property type="nucleotide sequence ID" value="NC_005861.2"/>
</dbReference>
<dbReference type="SMR" id="Q6MDG9"/>
<dbReference type="STRING" id="264201.pc0656"/>
<dbReference type="KEGG" id="pcu:PC_RS03150"/>
<dbReference type="eggNOG" id="COG0336">
    <property type="taxonomic scope" value="Bacteria"/>
</dbReference>
<dbReference type="HOGENOM" id="CLU_047363_0_1_0"/>
<dbReference type="OrthoDB" id="9807416at2"/>
<dbReference type="Proteomes" id="UP000000529">
    <property type="component" value="Chromosome"/>
</dbReference>
<dbReference type="GO" id="GO:0005829">
    <property type="term" value="C:cytosol"/>
    <property type="evidence" value="ECO:0007669"/>
    <property type="project" value="TreeGrafter"/>
</dbReference>
<dbReference type="GO" id="GO:0052906">
    <property type="term" value="F:tRNA (guanine(37)-N1)-methyltransferase activity"/>
    <property type="evidence" value="ECO:0007669"/>
    <property type="project" value="UniProtKB-UniRule"/>
</dbReference>
<dbReference type="GO" id="GO:0002939">
    <property type="term" value="P:tRNA N1-guanine methylation"/>
    <property type="evidence" value="ECO:0007669"/>
    <property type="project" value="TreeGrafter"/>
</dbReference>
<dbReference type="CDD" id="cd18080">
    <property type="entry name" value="TrmD-like"/>
    <property type="match status" value="1"/>
</dbReference>
<dbReference type="FunFam" id="1.10.1270.20:FF:000001">
    <property type="entry name" value="tRNA (guanine-N(1)-)-methyltransferase"/>
    <property type="match status" value="1"/>
</dbReference>
<dbReference type="FunFam" id="3.40.1280.10:FF:000001">
    <property type="entry name" value="tRNA (guanine-N(1)-)-methyltransferase"/>
    <property type="match status" value="1"/>
</dbReference>
<dbReference type="Gene3D" id="3.40.1280.10">
    <property type="match status" value="1"/>
</dbReference>
<dbReference type="Gene3D" id="1.10.1270.20">
    <property type="entry name" value="tRNA(m1g37)methyltransferase, domain 2"/>
    <property type="match status" value="1"/>
</dbReference>
<dbReference type="HAMAP" id="MF_00605">
    <property type="entry name" value="TrmD"/>
    <property type="match status" value="1"/>
</dbReference>
<dbReference type="InterPro" id="IPR029028">
    <property type="entry name" value="Alpha/beta_knot_MTases"/>
</dbReference>
<dbReference type="InterPro" id="IPR023148">
    <property type="entry name" value="tRNA_m1G_MeTrfase_C_sf"/>
</dbReference>
<dbReference type="InterPro" id="IPR002649">
    <property type="entry name" value="tRNA_m1G_MeTrfase_TrmD"/>
</dbReference>
<dbReference type="InterPro" id="IPR029026">
    <property type="entry name" value="tRNA_m1G_MTases_N"/>
</dbReference>
<dbReference type="InterPro" id="IPR016009">
    <property type="entry name" value="tRNA_MeTrfase_TRMD/TRM10"/>
</dbReference>
<dbReference type="NCBIfam" id="NF000648">
    <property type="entry name" value="PRK00026.1"/>
    <property type="match status" value="1"/>
</dbReference>
<dbReference type="NCBIfam" id="TIGR00088">
    <property type="entry name" value="trmD"/>
    <property type="match status" value="1"/>
</dbReference>
<dbReference type="PANTHER" id="PTHR46417">
    <property type="entry name" value="TRNA (GUANINE-N(1)-)-METHYLTRANSFERASE"/>
    <property type="match status" value="1"/>
</dbReference>
<dbReference type="PANTHER" id="PTHR46417:SF1">
    <property type="entry name" value="TRNA (GUANINE-N(1)-)-METHYLTRANSFERASE"/>
    <property type="match status" value="1"/>
</dbReference>
<dbReference type="Pfam" id="PF01746">
    <property type="entry name" value="tRNA_m1G_MT"/>
    <property type="match status" value="1"/>
</dbReference>
<dbReference type="PIRSF" id="PIRSF000386">
    <property type="entry name" value="tRNA_mtase"/>
    <property type="match status" value="1"/>
</dbReference>
<dbReference type="SUPFAM" id="SSF75217">
    <property type="entry name" value="alpha/beta knot"/>
    <property type="match status" value="1"/>
</dbReference>
<gene>
    <name evidence="1" type="primary">trmD</name>
    <name type="ordered locus">pc0656</name>
</gene>
<keyword id="KW-0963">Cytoplasm</keyword>
<keyword id="KW-0489">Methyltransferase</keyword>
<keyword id="KW-1185">Reference proteome</keyword>
<keyword id="KW-0949">S-adenosyl-L-methionine</keyword>
<keyword id="KW-0808">Transferase</keyword>
<keyword id="KW-0819">tRNA processing</keyword>
<comment type="function">
    <text evidence="1">Specifically methylates guanosine-37 in various tRNAs.</text>
</comment>
<comment type="catalytic activity">
    <reaction evidence="1">
        <text>guanosine(37) in tRNA + S-adenosyl-L-methionine = N(1)-methylguanosine(37) in tRNA + S-adenosyl-L-homocysteine + H(+)</text>
        <dbReference type="Rhea" id="RHEA:36899"/>
        <dbReference type="Rhea" id="RHEA-COMP:10145"/>
        <dbReference type="Rhea" id="RHEA-COMP:10147"/>
        <dbReference type="ChEBI" id="CHEBI:15378"/>
        <dbReference type="ChEBI" id="CHEBI:57856"/>
        <dbReference type="ChEBI" id="CHEBI:59789"/>
        <dbReference type="ChEBI" id="CHEBI:73542"/>
        <dbReference type="ChEBI" id="CHEBI:74269"/>
        <dbReference type="EC" id="2.1.1.228"/>
    </reaction>
</comment>
<comment type="subunit">
    <text evidence="1">Homodimer.</text>
</comment>
<comment type="subcellular location">
    <subcellularLocation>
        <location evidence="1">Cytoplasm</location>
    </subcellularLocation>
</comment>
<comment type="similarity">
    <text evidence="1">Belongs to the RNA methyltransferase TrmD family.</text>
</comment>
<sequence length="222" mass="24836">MIVDILSLFPGYFKGPFDESILKRAQEKGLLTIRLTDIRDFADNRFHRVDDRPYGGGPGMVMMPQPVTMAIQHVKTPEAKVIYLSPQGRTLNAVKCRQLALEKHLILLCGHYEGIDQRVLDEEVDEEISIGDYVLTNGCLAAIVLLDAFSRFIPGVLGHPSAAAEDSFEGGLLDYPHYTRPEVFQGCSVPNVLLSGNHQEIAKWRHEQALKKTQEIRPDLLA</sequence>
<reference key="1">
    <citation type="journal article" date="2004" name="Science">
        <title>Illuminating the evolutionary history of chlamydiae.</title>
        <authorList>
            <person name="Horn M."/>
            <person name="Collingro A."/>
            <person name="Schmitz-Esser S."/>
            <person name="Beier C.L."/>
            <person name="Purkhold U."/>
            <person name="Fartmann B."/>
            <person name="Brandt P."/>
            <person name="Nyakatura G.J."/>
            <person name="Droege M."/>
            <person name="Frishman D."/>
            <person name="Rattei T."/>
            <person name="Mewes H.-W."/>
            <person name="Wagner M."/>
        </authorList>
    </citation>
    <scope>NUCLEOTIDE SEQUENCE [LARGE SCALE GENOMIC DNA]</scope>
    <source>
        <strain>UWE25</strain>
    </source>
</reference>